<name>EGTB_MYCTU</name>
<gene>
    <name type="primary">egtB</name>
    <name type="ordered locus">Rv3703c</name>
</gene>
<organism>
    <name type="scientific">Mycobacterium tuberculosis (strain ATCC 25618 / H37Rv)</name>
    <dbReference type="NCBI Taxonomy" id="83332"/>
    <lineage>
        <taxon>Bacteria</taxon>
        <taxon>Bacillati</taxon>
        <taxon>Actinomycetota</taxon>
        <taxon>Actinomycetes</taxon>
        <taxon>Mycobacteriales</taxon>
        <taxon>Mycobacteriaceae</taxon>
        <taxon>Mycobacterium</taxon>
        <taxon>Mycobacterium tuberculosis complex</taxon>
    </lineage>
</organism>
<comment type="function">
    <text evidence="1 3">Catalyzes the oxidative sulfurization of hercynine (N-alpha,N-alpha,N-alpha-trimethyl-L-histidine) into hercynyl-gamma-L-glutamyl-L-cysteine sulfoxide, a step in the biosynthesis pathway of ergothioneine. Ergothioneine is an antioxidant that protects mycobacteria from oxidative stress.</text>
</comment>
<comment type="catalytic activity">
    <reaction evidence="1">
        <text>gamma-L-glutamyl-L-cysteine + hercynine + O2 = gamma-L-glutamyl-hercynylcysteine S-oxide + H2O</text>
        <dbReference type="Rhea" id="RHEA:42672"/>
        <dbReference type="ChEBI" id="CHEBI:15377"/>
        <dbReference type="ChEBI" id="CHEBI:15379"/>
        <dbReference type="ChEBI" id="CHEBI:15781"/>
        <dbReference type="ChEBI" id="CHEBI:58173"/>
        <dbReference type="ChEBI" id="CHEBI:82703"/>
        <dbReference type="EC" id="1.14.99.50"/>
    </reaction>
</comment>
<comment type="cofactor">
    <cofactor evidence="1">
        <name>Fe(2+)</name>
        <dbReference type="ChEBI" id="CHEBI:29033"/>
    </cofactor>
</comment>
<comment type="pathway">
    <text evidence="1">Amino-acid biosynthesis; ergothioneine biosynthesis.</text>
</comment>
<comment type="subunit">
    <text evidence="1">Monomer.</text>
</comment>
<comment type="similarity">
    <text evidence="4">Belongs to the EgtB family.</text>
</comment>
<protein>
    <recommendedName>
        <fullName>Hercynine oxygenase</fullName>
        <ecNumber evidence="1">1.14.99.50</ecNumber>
    </recommendedName>
    <alternativeName>
        <fullName evidence="1">Gamma-glutamyl hercynylcysteine S-oxide synthase</fullName>
    </alternativeName>
</protein>
<dbReference type="EC" id="1.14.99.50" evidence="1"/>
<dbReference type="EMBL" id="AL123456">
    <property type="protein sequence ID" value="CCP46528.1"/>
    <property type="molecule type" value="Genomic_DNA"/>
</dbReference>
<dbReference type="PIR" id="H70793">
    <property type="entry name" value="H70793"/>
</dbReference>
<dbReference type="RefSeq" id="WP_003419808.1">
    <property type="nucleotide sequence ID" value="NZ_NVQJ01000028.1"/>
</dbReference>
<dbReference type="SMR" id="O69671"/>
<dbReference type="STRING" id="83332.Rv3703c"/>
<dbReference type="PaxDb" id="83332-Rv3703c"/>
<dbReference type="DNASU" id="885128"/>
<dbReference type="GeneID" id="45427701"/>
<dbReference type="KEGG" id="mtu:Rv3703c"/>
<dbReference type="KEGG" id="mtv:RVBD_3703c"/>
<dbReference type="TubercuList" id="Rv3703c"/>
<dbReference type="eggNOG" id="COG1262">
    <property type="taxonomic scope" value="Bacteria"/>
</dbReference>
<dbReference type="InParanoid" id="O69671"/>
<dbReference type="OrthoDB" id="9768004at2"/>
<dbReference type="PhylomeDB" id="O69671"/>
<dbReference type="UniPathway" id="UPA01014"/>
<dbReference type="Proteomes" id="UP000001584">
    <property type="component" value="Chromosome"/>
</dbReference>
<dbReference type="GO" id="GO:0008198">
    <property type="term" value="F:ferrous iron binding"/>
    <property type="evidence" value="ECO:0000250"/>
    <property type="project" value="UniProtKB"/>
</dbReference>
<dbReference type="GO" id="GO:0044875">
    <property type="term" value="F:gamma-glutamyl hercynylcysteine sulfoxide synthase activity"/>
    <property type="evidence" value="ECO:0007669"/>
    <property type="project" value="UniProtKB-EC"/>
</dbReference>
<dbReference type="GO" id="GO:0016491">
    <property type="term" value="F:oxidoreductase activity"/>
    <property type="evidence" value="ECO:0000250"/>
    <property type="project" value="UniProtKB"/>
</dbReference>
<dbReference type="GO" id="GO:0052704">
    <property type="term" value="P:ergothioneine biosynthesis from histidine via gamma-glutamyl-hercynylcysteine sulfoxide"/>
    <property type="evidence" value="ECO:0000250"/>
    <property type="project" value="UniProtKB"/>
</dbReference>
<dbReference type="FunFam" id="3.90.1580.10:FF:000004">
    <property type="entry name" value="Hercynine oxygenase"/>
    <property type="match status" value="1"/>
</dbReference>
<dbReference type="Gene3D" id="3.90.1580.10">
    <property type="entry name" value="paralog of FGE (formylglycine-generating enzyme)"/>
    <property type="match status" value="1"/>
</dbReference>
<dbReference type="HAMAP" id="MF_02035">
    <property type="entry name" value="EgtB"/>
    <property type="match status" value="1"/>
</dbReference>
<dbReference type="InterPro" id="IPR016187">
    <property type="entry name" value="CTDL_fold"/>
</dbReference>
<dbReference type="InterPro" id="IPR024775">
    <property type="entry name" value="DinB-like"/>
</dbReference>
<dbReference type="InterPro" id="IPR034660">
    <property type="entry name" value="DinB/YfiT-like"/>
</dbReference>
<dbReference type="InterPro" id="IPR017806">
    <property type="entry name" value="EgtB"/>
</dbReference>
<dbReference type="InterPro" id="IPR032890">
    <property type="entry name" value="EgtB_Actinobacteria"/>
</dbReference>
<dbReference type="InterPro" id="IPR051043">
    <property type="entry name" value="Sulfatase_Mod_Factor_Kinase"/>
</dbReference>
<dbReference type="InterPro" id="IPR005532">
    <property type="entry name" value="SUMF_dom"/>
</dbReference>
<dbReference type="InterPro" id="IPR042095">
    <property type="entry name" value="SUMF_sf"/>
</dbReference>
<dbReference type="NCBIfam" id="TIGR03440">
    <property type="entry name" value="egtB_TIGR03440"/>
    <property type="match status" value="1"/>
</dbReference>
<dbReference type="PANTHER" id="PTHR23150:SF36">
    <property type="entry name" value="HERCYNINE OXYGENASE"/>
    <property type="match status" value="1"/>
</dbReference>
<dbReference type="PANTHER" id="PTHR23150">
    <property type="entry name" value="SULFATASE MODIFYING FACTOR 1, 2"/>
    <property type="match status" value="1"/>
</dbReference>
<dbReference type="Pfam" id="PF12867">
    <property type="entry name" value="DinB_2"/>
    <property type="match status" value="1"/>
</dbReference>
<dbReference type="Pfam" id="PF03781">
    <property type="entry name" value="FGE-sulfatase"/>
    <property type="match status" value="1"/>
</dbReference>
<dbReference type="SUPFAM" id="SSF56436">
    <property type="entry name" value="C-type lectin-like"/>
    <property type="match status" value="1"/>
</dbReference>
<dbReference type="SUPFAM" id="SSF109854">
    <property type="entry name" value="DinB/YfiT-like putative metalloenzymes"/>
    <property type="match status" value="1"/>
</dbReference>
<evidence type="ECO:0000250" key="1">
    <source>
        <dbReference type="UniProtKB" id="A0R5N0"/>
    </source>
</evidence>
<evidence type="ECO:0000250" key="2">
    <source>
        <dbReference type="UniProtKB" id="G7CFI3"/>
    </source>
</evidence>
<evidence type="ECO:0000250" key="3">
    <source>
        <dbReference type="UniProtKB" id="Q7D513"/>
    </source>
</evidence>
<evidence type="ECO:0000305" key="4"/>
<accession>O69671</accession>
<accession>L0TDB1</accession>
<keyword id="KW-0408">Iron</keyword>
<keyword id="KW-0479">Metal-binding</keyword>
<keyword id="KW-0503">Monooxygenase</keyword>
<keyword id="KW-0560">Oxidoreductase</keyword>
<keyword id="KW-1185">Reference proteome</keyword>
<sequence length="425" mass="47139">MTSPEQLACHLARARARTLRLVDFDDAELCCQYDPLMSPLVWDLAHIGQQEELWLLRGGDPGQPGLLPPAVEGLYDAFEHSRASRVELPLLSPARARSYCATVRSAALDALAALPEDGDSFVFAMVISHENQHDETMLQALNLRTGSPLLAATSALPAGRPRMAGTSVLVAGGPFVLGVDAADEPCSLDNERPAHVVDVPAFRIGRVPVTNGEWQDFIDDGGYTQSRWWSERGWQHRQRAGLTAPQFWRSGGRTRTRFGHVEDIPADEPVQHVSYFEAEAYAAWAGARLPTEVEWEKACAWDPATGSRRRYPWGTEEPTDTYANLGGQTLRPAPVGAYPAGASACGAEQMLGDVWEWTTSPLRPWPGFVPMVYERYSQPFFGGDYRVLRGGSWAVEPAILRPSFRNWDHPYRRQIFAGVRLAWDI</sequence>
<feature type="chain" id="PRO_0000413648" description="Hercynine oxygenase">
    <location>
        <begin position="1"/>
        <end position="425"/>
    </location>
</feature>
<feature type="binding site" evidence="2">
    <location>
        <position position="46"/>
    </location>
    <ligand>
        <name>Fe cation</name>
        <dbReference type="ChEBI" id="CHEBI:24875"/>
    </ligand>
</feature>
<feature type="binding site" evidence="2">
    <location>
        <begin position="82"/>
        <end position="85"/>
    </location>
    <ligand>
        <name>gamma-L-glutamyl-L-cysteine</name>
        <dbReference type="ChEBI" id="CHEBI:58173"/>
    </ligand>
</feature>
<feature type="binding site" evidence="2">
    <location>
        <position position="129"/>
    </location>
    <ligand>
        <name>Fe cation</name>
        <dbReference type="ChEBI" id="CHEBI:24875"/>
    </ligand>
</feature>
<feature type="binding site" evidence="2">
    <location>
        <position position="133"/>
    </location>
    <ligand>
        <name>Fe cation</name>
        <dbReference type="ChEBI" id="CHEBI:24875"/>
    </ligand>
</feature>
<feature type="binding site" evidence="2">
    <location>
        <position position="408"/>
    </location>
    <ligand>
        <name>gamma-L-glutamyl-L-cysteine</name>
        <dbReference type="ChEBI" id="CHEBI:58173"/>
    </ligand>
</feature>
<feature type="binding site" evidence="2">
    <location>
        <position position="412"/>
    </location>
    <ligand>
        <name>gamma-L-glutamyl-L-cysteine</name>
        <dbReference type="ChEBI" id="CHEBI:58173"/>
    </ligand>
</feature>
<proteinExistence type="evidence at protein level"/>
<reference key="1">
    <citation type="journal article" date="1998" name="Nature">
        <title>Deciphering the biology of Mycobacterium tuberculosis from the complete genome sequence.</title>
        <authorList>
            <person name="Cole S.T."/>
            <person name="Brosch R."/>
            <person name="Parkhill J."/>
            <person name="Garnier T."/>
            <person name="Churcher C.M."/>
            <person name="Harris D.E."/>
            <person name="Gordon S.V."/>
            <person name="Eiglmeier K."/>
            <person name="Gas S."/>
            <person name="Barry C.E. III"/>
            <person name="Tekaia F."/>
            <person name="Badcock K."/>
            <person name="Basham D."/>
            <person name="Brown D."/>
            <person name="Chillingworth T."/>
            <person name="Connor R."/>
            <person name="Davies R.M."/>
            <person name="Devlin K."/>
            <person name="Feltwell T."/>
            <person name="Gentles S."/>
            <person name="Hamlin N."/>
            <person name="Holroyd S."/>
            <person name="Hornsby T."/>
            <person name="Jagels K."/>
            <person name="Krogh A."/>
            <person name="McLean J."/>
            <person name="Moule S."/>
            <person name="Murphy L.D."/>
            <person name="Oliver S."/>
            <person name="Osborne J."/>
            <person name="Quail M.A."/>
            <person name="Rajandream M.A."/>
            <person name="Rogers J."/>
            <person name="Rutter S."/>
            <person name="Seeger K."/>
            <person name="Skelton S."/>
            <person name="Squares S."/>
            <person name="Squares R."/>
            <person name="Sulston J.E."/>
            <person name="Taylor K."/>
            <person name="Whitehead S."/>
            <person name="Barrell B.G."/>
        </authorList>
    </citation>
    <scope>NUCLEOTIDE SEQUENCE [LARGE SCALE GENOMIC DNA]</scope>
    <source>
        <strain>ATCC 25618 / H37Rv</strain>
    </source>
</reference>
<reference key="2">
    <citation type="journal article" date="2011" name="Mol. Cell. Proteomics">
        <title>Proteogenomic analysis of Mycobacterium tuberculosis by high resolution mass spectrometry.</title>
        <authorList>
            <person name="Kelkar D.S."/>
            <person name="Kumar D."/>
            <person name="Kumar P."/>
            <person name="Balakrishnan L."/>
            <person name="Muthusamy B."/>
            <person name="Yadav A.K."/>
            <person name="Shrivastava P."/>
            <person name="Marimuthu A."/>
            <person name="Anand S."/>
            <person name="Sundaram H."/>
            <person name="Kingsbury R."/>
            <person name="Harsha H.C."/>
            <person name="Nair B."/>
            <person name="Prasad T.S."/>
            <person name="Chauhan D.S."/>
            <person name="Katoch K."/>
            <person name="Katoch V.M."/>
            <person name="Kumar P."/>
            <person name="Chaerkady R."/>
            <person name="Ramachandran S."/>
            <person name="Dash D."/>
            <person name="Pandey A."/>
        </authorList>
    </citation>
    <scope>IDENTIFICATION BY MASS SPECTROMETRY [LARGE SCALE ANALYSIS]</scope>
    <source>
        <strain>ATCC 25618 / H37Rv</strain>
    </source>
</reference>